<feature type="signal peptide" evidence="3">
    <location>
        <begin position="1"/>
        <end position="17"/>
    </location>
</feature>
<feature type="chain" id="PRO_0000043275" description="Protein OS-9 homolog">
    <location>
        <begin position="18"/>
        <end position="558"/>
    </location>
</feature>
<feature type="domain" description="MRH" evidence="4">
    <location>
        <begin position="111"/>
        <end position="237"/>
    </location>
</feature>
<feature type="region of interest" description="Disordered" evidence="5">
    <location>
        <begin position="435"/>
        <end position="508"/>
    </location>
</feature>
<feature type="region of interest" description="Disordered" evidence="5">
    <location>
        <begin position="539"/>
        <end position="558"/>
    </location>
</feature>
<feature type="compositionally biased region" description="Basic and acidic residues" evidence="5">
    <location>
        <begin position="441"/>
        <end position="466"/>
    </location>
</feature>
<feature type="compositionally biased region" description="Polar residues" evidence="5">
    <location>
        <begin position="474"/>
        <end position="492"/>
    </location>
</feature>
<feature type="compositionally biased region" description="Acidic residues" evidence="5">
    <location>
        <begin position="543"/>
        <end position="558"/>
    </location>
</feature>
<feature type="binding site" evidence="2">
    <location>
        <position position="133"/>
    </location>
    <ligand>
        <name>a mannooligosaccharide derivative</name>
        <dbReference type="ChEBI" id="CHEBI:71274"/>
    </ligand>
</feature>
<feature type="binding site" evidence="2">
    <location>
        <position position="197"/>
    </location>
    <ligand>
        <name>a mannooligosaccharide derivative</name>
        <dbReference type="ChEBI" id="CHEBI:71274"/>
    </ligand>
</feature>
<feature type="binding site" evidence="2">
    <location>
        <position position="219"/>
    </location>
    <ligand>
        <name>a mannooligosaccharide derivative</name>
        <dbReference type="ChEBI" id="CHEBI:71274"/>
    </ligand>
</feature>
<feature type="binding site" evidence="2">
    <location>
        <position position="225"/>
    </location>
    <ligand>
        <name>a mannooligosaccharide derivative</name>
        <dbReference type="ChEBI" id="CHEBI:71274"/>
    </ligand>
</feature>
<feature type="glycosylation site" description="N-linked (GlcNAc...) asparagine" evidence="3">
    <location>
        <position position="68"/>
    </location>
</feature>
<feature type="disulfide bond" evidence="4">
    <location>
        <begin position="113"/>
        <end position="126"/>
    </location>
</feature>
<feature type="disulfide bond" evidence="4">
    <location>
        <begin position="190"/>
        <end position="223"/>
    </location>
</feature>
<feature type="disulfide bond" evidence="4">
    <location>
        <begin position="205"/>
        <end position="235"/>
    </location>
</feature>
<organism>
    <name type="scientific">Yarrowia lipolytica (strain CLIB 122 / E 150)</name>
    <name type="common">Yeast</name>
    <name type="synonym">Candida lipolytica</name>
    <dbReference type="NCBI Taxonomy" id="284591"/>
    <lineage>
        <taxon>Eukaryota</taxon>
        <taxon>Fungi</taxon>
        <taxon>Dikarya</taxon>
        <taxon>Ascomycota</taxon>
        <taxon>Saccharomycotina</taxon>
        <taxon>Dipodascomycetes</taxon>
        <taxon>Dipodascales</taxon>
        <taxon>Dipodascales incertae sedis</taxon>
        <taxon>Yarrowia</taxon>
    </lineage>
</organism>
<sequence length="558" mass="63074">MLLKSLALIASSSLAATFNIGDDLFADPQFTVQFHNRPLRQADVQNGLLPHRDPVYGHPLGYEMMQFNGTNHICGIPEVTTTKSSKSREEGELSPTEARDRALELMLPLLGDCLFYEQGFFSYRFCYGSGVVQYRRHGDNYFPRIYPPPQADDSPTFVLGSFEKDDTTNTVTSAGGIPFLAHRLRSGTHCPLTGANREIEVQFVCDKNVQHDHILWIKEKRTCNYVMQVGTPRLCKDMRFQPPPDESLPIMCYSVESEAPEFETIDGMFDGVAHVKEEQEAVSARAHQFVGSNVNKDKIDEIEVAWRFTKARALNYIGVWLGDCVNRQTLFKELGIATPSHDAPFIIQTRSMFVPAPINRHFEVRLMITRQQLLLSINDDDVTLEEKYAWWQEQGDMSNLEIQGLTMLDDAGIEDVLARATDEVMKQLNKEAKQSKKLAKKKEAASTKREEAKKQVEASVEEKAVDSAEDDGTDTVTSTQTFFRTQTLSTAEAESKQMPDKAEEDEDEDLIVTMYFEDGEFKIEGFEVADFEGVKSAMKDLADKEDDDDDYEDYGLSD</sequence>
<keyword id="KW-1015">Disulfide bond</keyword>
<keyword id="KW-0256">Endoplasmic reticulum</keyword>
<keyword id="KW-0325">Glycoprotein</keyword>
<keyword id="KW-0430">Lectin</keyword>
<keyword id="KW-0472">Membrane</keyword>
<keyword id="KW-1185">Reference proteome</keyword>
<keyword id="KW-0732">Signal</keyword>
<dbReference type="EMBL" id="CR382131">
    <property type="protein sequence ID" value="CAG80275.1"/>
    <property type="molecule type" value="Genomic_DNA"/>
</dbReference>
<dbReference type="RefSeq" id="XP_504671.1">
    <property type="nucleotide sequence ID" value="XM_504671.1"/>
</dbReference>
<dbReference type="STRING" id="284591.Q6C3U1"/>
<dbReference type="GlyCosmos" id="Q6C3U1">
    <property type="glycosylation" value="1 site, No reported glycans"/>
</dbReference>
<dbReference type="EnsemblFungi" id="CAG80275">
    <property type="protein sequence ID" value="CAG80275"/>
    <property type="gene ID" value="YALI0_E32131g"/>
</dbReference>
<dbReference type="KEGG" id="yli:2912332"/>
<dbReference type="VEuPathDB" id="FungiDB:YALI0_E32131g"/>
<dbReference type="HOGENOM" id="CLU_488536_0_0_1"/>
<dbReference type="InParanoid" id="Q6C3U1"/>
<dbReference type="OMA" id="RETKICH"/>
<dbReference type="OrthoDB" id="100155at4891"/>
<dbReference type="Proteomes" id="UP000001300">
    <property type="component" value="Chromosome E"/>
</dbReference>
<dbReference type="GO" id="GO:0005788">
    <property type="term" value="C:endoplasmic reticulum lumen"/>
    <property type="evidence" value="ECO:0000318"/>
    <property type="project" value="GO_Central"/>
</dbReference>
<dbReference type="GO" id="GO:0005789">
    <property type="term" value="C:endoplasmic reticulum membrane"/>
    <property type="evidence" value="ECO:0007669"/>
    <property type="project" value="UniProtKB-SubCell"/>
</dbReference>
<dbReference type="GO" id="GO:0030246">
    <property type="term" value="F:carbohydrate binding"/>
    <property type="evidence" value="ECO:0007669"/>
    <property type="project" value="UniProtKB-KW"/>
</dbReference>
<dbReference type="GO" id="GO:0030968">
    <property type="term" value="P:endoplasmic reticulum unfolded protein response"/>
    <property type="evidence" value="ECO:0007669"/>
    <property type="project" value="InterPro"/>
</dbReference>
<dbReference type="GO" id="GO:0030970">
    <property type="term" value="P:retrograde protein transport, ER to cytosol"/>
    <property type="evidence" value="ECO:0000318"/>
    <property type="project" value="GO_Central"/>
</dbReference>
<dbReference type="FunFam" id="2.70.130.10:FF:000041">
    <property type="entry name" value="Protein OS-9 homolog"/>
    <property type="match status" value="1"/>
</dbReference>
<dbReference type="Gene3D" id="2.70.130.10">
    <property type="entry name" value="Mannose-6-phosphate receptor binding domain"/>
    <property type="match status" value="1"/>
</dbReference>
<dbReference type="InterPro" id="IPR009011">
    <property type="entry name" value="Man6P_isomerase_rcpt-bd_dom_sf"/>
</dbReference>
<dbReference type="InterPro" id="IPR044865">
    <property type="entry name" value="MRH_dom"/>
</dbReference>
<dbReference type="InterPro" id="IPR045149">
    <property type="entry name" value="OS-9-like"/>
</dbReference>
<dbReference type="InterPro" id="IPR012913">
    <property type="entry name" value="OS9-like_dom"/>
</dbReference>
<dbReference type="PANTHER" id="PTHR15414:SF0">
    <property type="entry name" value="ENDOPLASMIC RETICULUM LECTIN 1"/>
    <property type="match status" value="1"/>
</dbReference>
<dbReference type="PANTHER" id="PTHR15414">
    <property type="entry name" value="OS-9-RELATED"/>
    <property type="match status" value="1"/>
</dbReference>
<dbReference type="Pfam" id="PF07915">
    <property type="entry name" value="PRKCSH"/>
    <property type="match status" value="1"/>
</dbReference>
<dbReference type="SUPFAM" id="SSF50911">
    <property type="entry name" value="Mannose 6-phosphate receptor domain"/>
    <property type="match status" value="1"/>
</dbReference>
<dbReference type="PROSITE" id="PS51914">
    <property type="entry name" value="MRH"/>
    <property type="match status" value="1"/>
</dbReference>
<name>OS9_YARLI</name>
<accession>Q6C3U1</accession>
<gene>
    <name type="primary">YOS9</name>
    <name type="ordered locus">YALI0E32131g</name>
</gene>
<protein>
    <recommendedName>
        <fullName>Protein OS-9 homolog</fullName>
    </recommendedName>
</protein>
<proteinExistence type="inferred from homology"/>
<comment type="function">
    <text evidence="1">Lectin involved in the quality control of the secretory pathway. As a member of the endoplasmic reticulum-associated degradation lumenal (ERAD-L) surveillance system, targets misfolded endoplasmic reticulum lumenal glycoproteins for degradation (By similarity).</text>
</comment>
<comment type="subunit">
    <text evidence="1">Interacts with missfolded ER lumenal proteins.</text>
</comment>
<comment type="subcellular location">
    <subcellularLocation>
        <location evidence="1">Endoplasmic reticulum membrane</location>
        <topology evidence="1">Peripheral membrane protein</topology>
        <orientation evidence="1">Lumenal side</orientation>
    </subcellularLocation>
</comment>
<comment type="similarity">
    <text evidence="6">Belongs to the OS-9 family.</text>
</comment>
<evidence type="ECO:0000250" key="1"/>
<evidence type="ECO:0000250" key="2">
    <source>
        <dbReference type="UniProtKB" id="Q13438"/>
    </source>
</evidence>
<evidence type="ECO:0000255" key="3"/>
<evidence type="ECO:0000255" key="4">
    <source>
        <dbReference type="PROSITE-ProRule" id="PRU01262"/>
    </source>
</evidence>
<evidence type="ECO:0000256" key="5">
    <source>
        <dbReference type="SAM" id="MobiDB-lite"/>
    </source>
</evidence>
<evidence type="ECO:0000305" key="6"/>
<reference key="1">
    <citation type="journal article" date="2004" name="Nature">
        <title>Genome evolution in yeasts.</title>
        <authorList>
            <person name="Dujon B."/>
            <person name="Sherman D."/>
            <person name="Fischer G."/>
            <person name="Durrens P."/>
            <person name="Casaregola S."/>
            <person name="Lafontaine I."/>
            <person name="de Montigny J."/>
            <person name="Marck C."/>
            <person name="Neuveglise C."/>
            <person name="Talla E."/>
            <person name="Goffard N."/>
            <person name="Frangeul L."/>
            <person name="Aigle M."/>
            <person name="Anthouard V."/>
            <person name="Babour A."/>
            <person name="Barbe V."/>
            <person name="Barnay S."/>
            <person name="Blanchin S."/>
            <person name="Beckerich J.-M."/>
            <person name="Beyne E."/>
            <person name="Bleykasten C."/>
            <person name="Boisrame A."/>
            <person name="Boyer J."/>
            <person name="Cattolico L."/>
            <person name="Confanioleri F."/>
            <person name="de Daruvar A."/>
            <person name="Despons L."/>
            <person name="Fabre E."/>
            <person name="Fairhead C."/>
            <person name="Ferry-Dumazet H."/>
            <person name="Groppi A."/>
            <person name="Hantraye F."/>
            <person name="Hennequin C."/>
            <person name="Jauniaux N."/>
            <person name="Joyet P."/>
            <person name="Kachouri R."/>
            <person name="Kerrest A."/>
            <person name="Koszul R."/>
            <person name="Lemaire M."/>
            <person name="Lesur I."/>
            <person name="Ma L."/>
            <person name="Muller H."/>
            <person name="Nicaud J.-M."/>
            <person name="Nikolski M."/>
            <person name="Oztas S."/>
            <person name="Ozier-Kalogeropoulos O."/>
            <person name="Pellenz S."/>
            <person name="Potier S."/>
            <person name="Richard G.-F."/>
            <person name="Straub M.-L."/>
            <person name="Suleau A."/>
            <person name="Swennen D."/>
            <person name="Tekaia F."/>
            <person name="Wesolowski-Louvel M."/>
            <person name="Westhof E."/>
            <person name="Wirth B."/>
            <person name="Zeniou-Meyer M."/>
            <person name="Zivanovic Y."/>
            <person name="Bolotin-Fukuhara M."/>
            <person name="Thierry A."/>
            <person name="Bouchier C."/>
            <person name="Caudron B."/>
            <person name="Scarpelli C."/>
            <person name="Gaillardin C."/>
            <person name="Weissenbach J."/>
            <person name="Wincker P."/>
            <person name="Souciet J.-L."/>
        </authorList>
    </citation>
    <scope>NUCLEOTIDE SEQUENCE [LARGE SCALE GENOMIC DNA]</scope>
    <source>
        <strain>CLIB 122 / E 150</strain>
    </source>
</reference>